<protein>
    <recommendedName>
        <fullName evidence="1">Large ribosomal subunit protein bL27</fullName>
    </recommendedName>
    <alternativeName>
        <fullName evidence="3">50S ribosomal protein L27</fullName>
    </alternativeName>
</protein>
<dbReference type="EMBL" id="CP001275">
    <property type="protein sequence ID" value="ACM06255.1"/>
    <property type="molecule type" value="Genomic_DNA"/>
</dbReference>
<dbReference type="RefSeq" id="WP_015922374.1">
    <property type="nucleotide sequence ID" value="NC_011959.1"/>
</dbReference>
<dbReference type="SMR" id="B9L2M3"/>
<dbReference type="STRING" id="309801.trd_1425"/>
<dbReference type="KEGG" id="tro:trd_1425"/>
<dbReference type="eggNOG" id="COG0211">
    <property type="taxonomic scope" value="Bacteria"/>
</dbReference>
<dbReference type="HOGENOM" id="CLU_095424_4_0_0"/>
<dbReference type="OrthoDB" id="9803474at2"/>
<dbReference type="Proteomes" id="UP000000447">
    <property type="component" value="Chromosome"/>
</dbReference>
<dbReference type="GO" id="GO:0022625">
    <property type="term" value="C:cytosolic large ribosomal subunit"/>
    <property type="evidence" value="ECO:0007669"/>
    <property type="project" value="TreeGrafter"/>
</dbReference>
<dbReference type="GO" id="GO:0003735">
    <property type="term" value="F:structural constituent of ribosome"/>
    <property type="evidence" value="ECO:0007669"/>
    <property type="project" value="InterPro"/>
</dbReference>
<dbReference type="GO" id="GO:0006412">
    <property type="term" value="P:translation"/>
    <property type="evidence" value="ECO:0007669"/>
    <property type="project" value="UniProtKB-UniRule"/>
</dbReference>
<dbReference type="FunFam" id="2.40.50.100:FF:000004">
    <property type="entry name" value="50S ribosomal protein L27"/>
    <property type="match status" value="1"/>
</dbReference>
<dbReference type="Gene3D" id="2.40.50.100">
    <property type="match status" value="1"/>
</dbReference>
<dbReference type="HAMAP" id="MF_00539">
    <property type="entry name" value="Ribosomal_bL27"/>
    <property type="match status" value="1"/>
</dbReference>
<dbReference type="InterPro" id="IPR001684">
    <property type="entry name" value="Ribosomal_bL27"/>
</dbReference>
<dbReference type="InterPro" id="IPR018261">
    <property type="entry name" value="Ribosomal_bL27_CS"/>
</dbReference>
<dbReference type="NCBIfam" id="TIGR00062">
    <property type="entry name" value="L27"/>
    <property type="match status" value="1"/>
</dbReference>
<dbReference type="PANTHER" id="PTHR15893:SF0">
    <property type="entry name" value="LARGE RIBOSOMAL SUBUNIT PROTEIN BL27M"/>
    <property type="match status" value="1"/>
</dbReference>
<dbReference type="PANTHER" id="PTHR15893">
    <property type="entry name" value="RIBOSOMAL PROTEIN L27"/>
    <property type="match status" value="1"/>
</dbReference>
<dbReference type="Pfam" id="PF01016">
    <property type="entry name" value="Ribosomal_L27"/>
    <property type="match status" value="1"/>
</dbReference>
<dbReference type="PRINTS" id="PR00063">
    <property type="entry name" value="RIBOSOMALL27"/>
</dbReference>
<dbReference type="SUPFAM" id="SSF110324">
    <property type="entry name" value="Ribosomal L27 protein-like"/>
    <property type="match status" value="1"/>
</dbReference>
<dbReference type="PROSITE" id="PS00831">
    <property type="entry name" value="RIBOSOMAL_L27"/>
    <property type="match status" value="1"/>
</dbReference>
<gene>
    <name evidence="1" type="primary">rpmA</name>
    <name type="ordered locus">trd_1425</name>
</gene>
<accession>B9L2M3</accession>
<feature type="chain" id="PRO_1000146558" description="Large ribosomal subunit protein bL27">
    <location>
        <begin position="1"/>
        <end position="99"/>
    </location>
</feature>
<feature type="region of interest" description="Disordered" evidence="2">
    <location>
        <begin position="1"/>
        <end position="21"/>
    </location>
</feature>
<sequence>MAHKKGGGSTRNGRDSRAKRLGVKRYDGQFVPAGSVLVRQRGTVFRPGRNVGMGRDYTLFALIDGYVKFEPISRDKRRVSVYPEPVGRTLPAPAGSATA</sequence>
<comment type="similarity">
    <text evidence="1">Belongs to the bacterial ribosomal protein bL27 family.</text>
</comment>
<evidence type="ECO:0000255" key="1">
    <source>
        <dbReference type="HAMAP-Rule" id="MF_00539"/>
    </source>
</evidence>
<evidence type="ECO:0000256" key="2">
    <source>
        <dbReference type="SAM" id="MobiDB-lite"/>
    </source>
</evidence>
<evidence type="ECO:0000305" key="3"/>
<keyword id="KW-1185">Reference proteome</keyword>
<keyword id="KW-0687">Ribonucleoprotein</keyword>
<keyword id="KW-0689">Ribosomal protein</keyword>
<proteinExistence type="inferred from homology"/>
<reference key="1">
    <citation type="journal article" date="2009" name="PLoS ONE">
        <title>Complete genome sequence of the aerobic CO-oxidizing thermophile Thermomicrobium roseum.</title>
        <authorList>
            <person name="Wu D."/>
            <person name="Raymond J."/>
            <person name="Wu M."/>
            <person name="Chatterji S."/>
            <person name="Ren Q."/>
            <person name="Graham J.E."/>
            <person name="Bryant D.A."/>
            <person name="Robb F."/>
            <person name="Colman A."/>
            <person name="Tallon L.J."/>
            <person name="Badger J.H."/>
            <person name="Madupu R."/>
            <person name="Ward N.L."/>
            <person name="Eisen J.A."/>
        </authorList>
    </citation>
    <scope>NUCLEOTIDE SEQUENCE [LARGE SCALE GENOMIC DNA]</scope>
    <source>
        <strain>ATCC 27502 / DSM 5159 / P-2</strain>
    </source>
</reference>
<organism>
    <name type="scientific">Thermomicrobium roseum (strain ATCC 27502 / DSM 5159 / P-2)</name>
    <dbReference type="NCBI Taxonomy" id="309801"/>
    <lineage>
        <taxon>Bacteria</taxon>
        <taxon>Pseudomonadati</taxon>
        <taxon>Thermomicrobiota</taxon>
        <taxon>Thermomicrobia</taxon>
        <taxon>Thermomicrobiales</taxon>
        <taxon>Thermomicrobiaceae</taxon>
        <taxon>Thermomicrobium</taxon>
    </lineage>
</organism>
<name>RL27_THERP</name>